<proteinExistence type="inferred from homology"/>
<dbReference type="EMBL" id="U04314">
    <property type="protein sequence ID" value="AAA21859.1"/>
    <property type="molecule type" value="mRNA"/>
</dbReference>
<dbReference type="RefSeq" id="YP_009221822.1">
    <property type="nucleotide sequence ID" value="NC_029049.1"/>
</dbReference>
<dbReference type="SMR" id="P60144"/>
<dbReference type="GeneID" id="26738161"/>
<dbReference type="GO" id="GO:0009535">
    <property type="term" value="C:chloroplast thylakoid membrane"/>
    <property type="evidence" value="ECO:0007669"/>
    <property type="project" value="UniProtKB-SubCell"/>
</dbReference>
<dbReference type="GO" id="GO:0009539">
    <property type="term" value="C:photosystem II reaction center"/>
    <property type="evidence" value="ECO:0007669"/>
    <property type="project" value="InterPro"/>
</dbReference>
<dbReference type="GO" id="GO:0015979">
    <property type="term" value="P:photosynthesis"/>
    <property type="evidence" value="ECO:0007669"/>
    <property type="project" value="UniProtKB-UniRule"/>
</dbReference>
<dbReference type="HAMAP" id="MF_01317">
    <property type="entry name" value="PSII_PsbL"/>
    <property type="match status" value="1"/>
</dbReference>
<dbReference type="InterPro" id="IPR003372">
    <property type="entry name" value="PSII_PsbL"/>
</dbReference>
<dbReference type="InterPro" id="IPR037266">
    <property type="entry name" value="PSII_PsbL_sf"/>
</dbReference>
<dbReference type="NCBIfam" id="NF001972">
    <property type="entry name" value="PRK00753.1"/>
    <property type="match status" value="1"/>
</dbReference>
<dbReference type="Pfam" id="PF02419">
    <property type="entry name" value="PsbL"/>
    <property type="match status" value="1"/>
</dbReference>
<dbReference type="SUPFAM" id="SSF161017">
    <property type="entry name" value="Photosystem II reaction center protein L, PsbL"/>
    <property type="match status" value="1"/>
</dbReference>
<accession>P60144</accession>
<accession>O47030</accession>
<accession>P12166</accession>
<accession>P12167</accession>
<accession>Q34007</accession>
<keyword id="KW-0150">Chloroplast</keyword>
<keyword id="KW-0472">Membrane</keyword>
<keyword id="KW-0602">Photosynthesis</keyword>
<keyword id="KW-0604">Photosystem II</keyword>
<keyword id="KW-0934">Plastid</keyword>
<keyword id="KW-0674">Reaction center</keyword>
<keyword id="KW-0793">Thylakoid</keyword>
<keyword id="KW-0812">Transmembrane</keyword>
<keyword id="KW-1133">Transmembrane helix</keyword>
<organism>
    <name type="scientific">Mesembryanthemum crystallinum</name>
    <name type="common">Common ice plant</name>
    <name type="synonym">Cryophytum crystallinum</name>
    <dbReference type="NCBI Taxonomy" id="3544"/>
    <lineage>
        <taxon>Eukaryota</taxon>
        <taxon>Viridiplantae</taxon>
        <taxon>Streptophyta</taxon>
        <taxon>Embryophyta</taxon>
        <taxon>Tracheophyta</taxon>
        <taxon>Spermatophyta</taxon>
        <taxon>Magnoliopsida</taxon>
        <taxon>eudicotyledons</taxon>
        <taxon>Gunneridae</taxon>
        <taxon>Pentapetalae</taxon>
        <taxon>Caryophyllales</taxon>
        <taxon>Aizoaceae</taxon>
        <taxon>Mesembryanthemum</taxon>
        <taxon>Mesembryanthemum subgen. Cryophytum</taxon>
    </lineage>
</organism>
<geneLocation type="chloroplast"/>
<gene>
    <name evidence="1" type="primary">psbL</name>
</gene>
<feature type="chain" id="PRO_0000219741" description="Photosystem II reaction center protein L">
    <location>
        <begin position="1"/>
        <end position="38"/>
    </location>
</feature>
<feature type="transmembrane region" description="Helical" evidence="1">
    <location>
        <begin position="17"/>
        <end position="37"/>
    </location>
</feature>
<evidence type="ECO:0000255" key="1">
    <source>
        <dbReference type="HAMAP-Rule" id="MF_01317"/>
    </source>
</evidence>
<name>PSBL_MESCR</name>
<protein>
    <recommendedName>
        <fullName evidence="1">Photosystem II reaction center protein L</fullName>
        <shortName evidence="1">PSII-L</shortName>
    </recommendedName>
</protein>
<sequence length="38" mass="4497">MTQSNPNEQNVELNRTSLYWGLLLIFVLAVLFSNYFFN</sequence>
<reference key="1">
    <citation type="journal article" date="1994" name="Plant Physiol.">
        <title>Characterization and expression of photosystem II genes (psbE, psbF, and psbL) from the facultative crassulacean acid metabolism plant Mesembryanthemum crystallinum.</title>
        <authorList>
            <person name="Forsthoefel N.R."/>
            <person name="Cushman J.C."/>
        </authorList>
    </citation>
    <scope>NUCLEOTIDE SEQUENCE [MRNA]</scope>
</reference>
<comment type="function">
    <text evidence="1">One of the components of the core complex of photosystem II (PSII). PSII is a light-driven water:plastoquinone oxidoreductase that uses light energy to abstract electrons from H(2)O, generating O(2) and a proton gradient subsequently used for ATP formation. It consists of a core antenna complex that captures photons, and an electron transfer chain that converts photonic excitation into a charge separation. This subunit is found at the monomer-monomer interface and is required for correct PSII assembly and/or dimerization.</text>
</comment>
<comment type="subunit">
    <text evidence="1">PSII is composed of 1 copy each of membrane proteins PsbA, PsbB, PsbC, PsbD, PsbE, PsbF, PsbH, PsbI, PsbJ, PsbK, PsbL, PsbM, PsbT, PsbX, PsbY, PsbZ, Psb30/Ycf12, at least 3 peripheral proteins of the oxygen-evolving complex and a large number of cofactors. It forms dimeric complexes.</text>
</comment>
<comment type="subcellular location">
    <subcellularLocation>
        <location evidence="1">Plastid</location>
        <location evidence="1">Chloroplast thylakoid membrane</location>
        <topology evidence="1">Single-pass membrane protein</topology>
    </subcellularLocation>
</comment>
<comment type="similarity">
    <text evidence="1">Belongs to the PsbL family.</text>
</comment>